<reference key="1">
    <citation type="journal article" date="2007" name="Nat. Biotechnol.">
        <title>Genome sequence of the lignocellulose-bioconverting and xylose-fermenting yeast Pichia stipitis.</title>
        <authorList>
            <person name="Jeffries T.W."/>
            <person name="Grigoriev I.V."/>
            <person name="Grimwood J."/>
            <person name="Laplaza J.M."/>
            <person name="Aerts A."/>
            <person name="Salamov A."/>
            <person name="Schmutz J."/>
            <person name="Lindquist E."/>
            <person name="Dehal P."/>
            <person name="Shapiro H."/>
            <person name="Jin Y.-S."/>
            <person name="Passoth V."/>
            <person name="Richardson P.M."/>
        </authorList>
    </citation>
    <scope>NUCLEOTIDE SEQUENCE [LARGE SCALE GENOMIC DNA]</scope>
    <source>
        <strain>ATCC 58785 / CBS 6054 / NBRC 10063 / NRRL Y-11545</strain>
    </source>
</reference>
<feature type="chain" id="PRO_0000339452" description="Nuclear protein localization protein 4">
    <location>
        <begin position="1"/>
        <end position="577"/>
    </location>
</feature>
<feature type="domain" description="MPN" evidence="2">
    <location>
        <begin position="246"/>
        <end position="383"/>
    </location>
</feature>
<protein>
    <recommendedName>
        <fullName>Nuclear protein localization protein 4</fullName>
    </recommendedName>
</protein>
<proteinExistence type="inferred from homology"/>
<name>NPL4_PICST</name>
<keyword id="KW-0963">Cytoplasm</keyword>
<keyword id="KW-0256">Endoplasmic reticulum</keyword>
<keyword id="KW-0472">Membrane</keyword>
<keyword id="KW-0509">mRNA transport</keyword>
<keyword id="KW-0539">Nucleus</keyword>
<keyword id="KW-0653">Protein transport</keyword>
<keyword id="KW-1185">Reference proteome</keyword>
<keyword id="KW-0811">Translocation</keyword>
<keyword id="KW-0813">Transport</keyword>
<organism>
    <name type="scientific">Scheffersomyces stipitis (strain ATCC 58785 / CBS 6054 / NBRC 10063 / NRRL Y-11545)</name>
    <name type="common">Yeast</name>
    <name type="synonym">Pichia stipitis</name>
    <dbReference type="NCBI Taxonomy" id="322104"/>
    <lineage>
        <taxon>Eukaryota</taxon>
        <taxon>Fungi</taxon>
        <taxon>Dikarya</taxon>
        <taxon>Ascomycota</taxon>
        <taxon>Saccharomycotina</taxon>
        <taxon>Pichiomycetes</taxon>
        <taxon>Debaryomycetaceae</taxon>
        <taxon>Scheffersomyces</taxon>
    </lineage>
</organism>
<dbReference type="EMBL" id="AAVQ01000001">
    <property type="protein sequence ID" value="EAZ63804.2"/>
    <property type="molecule type" value="Genomic_DNA"/>
</dbReference>
<dbReference type="RefSeq" id="XP_001387827.2">
    <property type="nucleotide sequence ID" value="XM_001387790.1"/>
</dbReference>
<dbReference type="SMR" id="A3GFS1"/>
<dbReference type="FunCoup" id="A3GFS1">
    <property type="interactions" value="973"/>
</dbReference>
<dbReference type="STRING" id="322104.A3GFS1"/>
<dbReference type="GeneID" id="4851120"/>
<dbReference type="KEGG" id="pic:PICST_80363"/>
<dbReference type="eggNOG" id="KOG2834">
    <property type="taxonomic scope" value="Eukaryota"/>
</dbReference>
<dbReference type="HOGENOM" id="CLU_017172_0_0_1"/>
<dbReference type="InParanoid" id="A3GFS1"/>
<dbReference type="OMA" id="KWSRTGR"/>
<dbReference type="OrthoDB" id="10251089at2759"/>
<dbReference type="Proteomes" id="UP000002258">
    <property type="component" value="Chromosome 1"/>
</dbReference>
<dbReference type="GO" id="GO:0036266">
    <property type="term" value="C:Cdc48p-Npl4p-Vms1p AAA ATPase complex"/>
    <property type="evidence" value="ECO:0007669"/>
    <property type="project" value="EnsemblFungi"/>
</dbReference>
<dbReference type="GO" id="GO:0000837">
    <property type="term" value="C:Doa10p ubiquitin ligase complex"/>
    <property type="evidence" value="ECO:0007669"/>
    <property type="project" value="EnsemblFungi"/>
</dbReference>
<dbReference type="GO" id="GO:0000839">
    <property type="term" value="C:Hrd1p ubiquitin ligase ERAD-L complex"/>
    <property type="evidence" value="ECO:0007669"/>
    <property type="project" value="EnsemblFungi"/>
</dbReference>
<dbReference type="GO" id="GO:0031965">
    <property type="term" value="C:nuclear membrane"/>
    <property type="evidence" value="ECO:0007669"/>
    <property type="project" value="UniProtKB-SubCell"/>
</dbReference>
<dbReference type="GO" id="GO:0048471">
    <property type="term" value="C:perinuclear region of cytoplasm"/>
    <property type="evidence" value="ECO:0007669"/>
    <property type="project" value="UniProtKB-SubCell"/>
</dbReference>
<dbReference type="GO" id="GO:0030894">
    <property type="term" value="C:replisome"/>
    <property type="evidence" value="ECO:0007669"/>
    <property type="project" value="EnsemblFungi"/>
</dbReference>
<dbReference type="GO" id="GO:1990112">
    <property type="term" value="C:RQC complex"/>
    <property type="evidence" value="ECO:0007669"/>
    <property type="project" value="EnsemblFungi"/>
</dbReference>
<dbReference type="GO" id="GO:0034098">
    <property type="term" value="C:VCP-NPL4-UFD1 AAA ATPase complex"/>
    <property type="evidence" value="ECO:0007669"/>
    <property type="project" value="EnsemblFungi"/>
</dbReference>
<dbReference type="GO" id="GO:0036435">
    <property type="term" value="F:K48-linked polyubiquitin modification-dependent protein binding"/>
    <property type="evidence" value="ECO:0007669"/>
    <property type="project" value="EnsemblFungi"/>
</dbReference>
<dbReference type="GO" id="GO:0043130">
    <property type="term" value="F:ubiquitin binding"/>
    <property type="evidence" value="ECO:0007669"/>
    <property type="project" value="TreeGrafter"/>
</dbReference>
<dbReference type="GO" id="GO:0031625">
    <property type="term" value="F:ubiquitin protein ligase binding"/>
    <property type="evidence" value="ECO:0007669"/>
    <property type="project" value="TreeGrafter"/>
</dbReference>
<dbReference type="GO" id="GO:0071629">
    <property type="term" value="P:cytoplasm protein quality control by the ubiquitin-proteasome system"/>
    <property type="evidence" value="ECO:0007669"/>
    <property type="project" value="EnsemblFungi"/>
</dbReference>
<dbReference type="GO" id="GO:0006274">
    <property type="term" value="P:DNA replication termination"/>
    <property type="evidence" value="ECO:0007669"/>
    <property type="project" value="EnsemblFungi"/>
</dbReference>
<dbReference type="GO" id="GO:0099638">
    <property type="term" value="P:endosome to plasma membrane protein transport"/>
    <property type="evidence" value="ECO:0007669"/>
    <property type="project" value="EnsemblFungi"/>
</dbReference>
<dbReference type="GO" id="GO:0072671">
    <property type="term" value="P:mitochondria-associated ubiquitin-dependent protein catabolic process"/>
    <property type="evidence" value="ECO:0007669"/>
    <property type="project" value="EnsemblFungi"/>
</dbReference>
<dbReference type="GO" id="GO:0051228">
    <property type="term" value="P:mitotic spindle disassembly"/>
    <property type="evidence" value="ECO:0007669"/>
    <property type="project" value="EnsemblFungi"/>
</dbReference>
<dbReference type="GO" id="GO:0051028">
    <property type="term" value="P:mRNA transport"/>
    <property type="evidence" value="ECO:0007669"/>
    <property type="project" value="UniProtKB-KW"/>
</dbReference>
<dbReference type="GO" id="GO:0070651">
    <property type="term" value="P:nonfunctional rRNA decay"/>
    <property type="evidence" value="ECO:0007669"/>
    <property type="project" value="EnsemblFungi"/>
</dbReference>
<dbReference type="GO" id="GO:1900182">
    <property type="term" value="P:positive regulation of protein localization to nucleus"/>
    <property type="evidence" value="ECO:0007669"/>
    <property type="project" value="EnsemblFungi"/>
</dbReference>
<dbReference type="GO" id="GO:0072665">
    <property type="term" value="P:protein localization to vacuole"/>
    <property type="evidence" value="ECO:0007669"/>
    <property type="project" value="EnsemblFungi"/>
</dbReference>
<dbReference type="GO" id="GO:0030970">
    <property type="term" value="P:retrograde protein transport, ER to cytosol"/>
    <property type="evidence" value="ECO:0007669"/>
    <property type="project" value="EnsemblFungi"/>
</dbReference>
<dbReference type="GO" id="GO:1990116">
    <property type="term" value="P:ribosome-associated ubiquitin-dependent protein catabolic process"/>
    <property type="evidence" value="ECO:0007669"/>
    <property type="project" value="EnsemblFungi"/>
</dbReference>
<dbReference type="CDD" id="cd08061">
    <property type="entry name" value="MPN_NPL4"/>
    <property type="match status" value="1"/>
</dbReference>
<dbReference type="Gene3D" id="3.10.20.90">
    <property type="entry name" value="Phosphatidylinositol 3-kinase Catalytic Subunit, Chain A, domain 1"/>
    <property type="match status" value="1"/>
</dbReference>
<dbReference type="InterPro" id="IPR037518">
    <property type="entry name" value="MPN"/>
</dbReference>
<dbReference type="InterPro" id="IPR016563">
    <property type="entry name" value="Npl4"/>
</dbReference>
<dbReference type="InterPro" id="IPR007717">
    <property type="entry name" value="NPL4_C"/>
</dbReference>
<dbReference type="InterPro" id="IPR007716">
    <property type="entry name" value="NPL4_Zn-bd_put"/>
</dbReference>
<dbReference type="InterPro" id="IPR029071">
    <property type="entry name" value="Ubiquitin-like_domsf"/>
</dbReference>
<dbReference type="PANTHER" id="PTHR12710">
    <property type="entry name" value="NUCLEAR PROTEIN LOCALIZATION 4"/>
    <property type="match status" value="1"/>
</dbReference>
<dbReference type="PANTHER" id="PTHR12710:SF0">
    <property type="entry name" value="NUCLEAR PROTEIN LOCALIZATION PROTEIN 4 HOMOLOG"/>
    <property type="match status" value="1"/>
</dbReference>
<dbReference type="Pfam" id="PF05021">
    <property type="entry name" value="NPL4"/>
    <property type="match status" value="1"/>
</dbReference>
<dbReference type="Pfam" id="PF05020">
    <property type="entry name" value="zf-NPL4"/>
    <property type="match status" value="1"/>
</dbReference>
<dbReference type="PIRSF" id="PIRSF010052">
    <property type="entry name" value="Polyub_prc_Npl4"/>
    <property type="match status" value="1"/>
</dbReference>
<dbReference type="SUPFAM" id="SSF54236">
    <property type="entry name" value="Ubiquitin-like"/>
    <property type="match status" value="1"/>
</dbReference>
<dbReference type="PROSITE" id="PS50249">
    <property type="entry name" value="MPN"/>
    <property type="match status" value="1"/>
</dbReference>
<gene>
    <name type="primary">NPL4</name>
    <name type="ORF">PICST_80363</name>
</gene>
<evidence type="ECO:0000250" key="1"/>
<evidence type="ECO:0000255" key="2">
    <source>
        <dbReference type="PROSITE-ProRule" id="PRU01182"/>
    </source>
</evidence>
<evidence type="ECO:0000305" key="3"/>
<comment type="function">
    <text evidence="1">Involved in the import of nuclear-targeted proteins into the nucleus and the export of poly(A) RNA out of the nucleus. Has a role in the endoplasmic reticulum-associated degradation (ERAD) pathway (By similarity).</text>
</comment>
<comment type="subcellular location">
    <subcellularLocation>
        <location evidence="1">Cytoplasm</location>
        <location evidence="1">Perinuclear region</location>
    </subcellularLocation>
    <subcellularLocation>
        <location evidence="1">Endoplasmic reticulum membrane</location>
        <topology evidence="1">Peripheral membrane protein</topology>
        <orientation evidence="1">Cytoplasmic side</orientation>
    </subcellularLocation>
    <subcellularLocation>
        <location evidence="1">Nucleus membrane</location>
        <topology evidence="1">Peripheral membrane protein</topology>
        <orientation evidence="1">Cytoplasmic side</orientation>
    </subcellularLocation>
    <text evidence="1">Localizes mainly at the nuclear periphery and the endoplasmic reticulum membrane.</text>
</comment>
<comment type="similarity">
    <text evidence="3">Belongs to the NPL4 family.</text>
</comment>
<sequence length="577" mass="64524">MSVTLRFRSREGTFRVAANPDADFLLVLEQLLSKISIEDVQNLYLSDKPNSKGELANGLCGKTVTELGLKNGDMLYASYEAATGSNPDSTTNITTSTNNHNSGSISIGHISIPTTTSGPRKVTQLPVDDVLEKDEGLIKRPLTKFCRHGAKGMCEFCSPLPPWDANYRKENAIKHMSYHAYLKELNELKNSKHNSSSYIAPLEEPNYSILLNCNEGHQPYPKGICSKCQPPPITLQLQKFRMVDHVEFATSSIMNNFIDVWRHTGVQRFGVMYGRYEPFDKVPLGIKAVVEAIYEPPQSGELDGITMLPWENEAEVDAIASELGIYKVGVVFTDLTDSGQKNGTVLCKRHKDSYFLSNLEILMAARNQIQHANITKFSSSGQFSSKFVTCVISGGLNGEIEPRSYQVSTSAEALVRADIITGSTQPSRLYVNSSNDRRYVPDVAYSELNEYGLEVKSNAKPTFPVDFLLVSLTDSFPVNPTPMFDTDSNFVIENRDFFNELQNLHAVSKYLNADTSGKGTSLCNFHFLVYLKRTNILGAQEFDLLLRFVRERQYEDYLHLVESPGWMTLITILEQST</sequence>
<accession>A3GFS1</accession>